<reference key="1">
    <citation type="journal article" date="1998" name="Science">
        <title>Genome sequence of the nematode C. elegans: a platform for investigating biology.</title>
        <authorList>
            <consortium name="The C. elegans sequencing consortium"/>
        </authorList>
    </citation>
    <scope>NUCLEOTIDE SEQUENCE [LARGE SCALE GENOMIC DNA]</scope>
    <source>
        <strain>Bristol N2</strain>
    </source>
</reference>
<protein>
    <recommendedName>
        <fullName evidence="1">Protein arginine methyltransferase NDUFAF7 homolog, mitochondrial</fullName>
        <ecNumber evidence="1">2.1.1.320</ecNumber>
    </recommendedName>
    <alternativeName>
        <fullName>NADH dehydrogenase [ubiquinone] complex I, assembly factor 7 homolog</fullName>
    </alternativeName>
    <alternativeName>
        <fullName>Protein midA homolog</fullName>
    </alternativeName>
</protein>
<sequence>MSLRVQNILINSLRQYSKQILKPPGYASPEKTNHLKKFLVDKIRVSGPITVAEYMKTCVSAPLVGYYGQFSKDQKVFGAKGDFITSPELTQLFGEMIGVWVFHELANTGHKGSWQLVELGPGRAQLMNDVLNALAKFNDKDVSVHLVETSDALIDEQEKSLCIYTSKNSIDTPFIRKNKTRTGVNIYWYKSIDDIPDGFTVFIGNEFLDALPIHQFHKSGDSWNEVYVNLTKDGDLCFMKSKGENLHTKGLIPSAIRDDSSRVTWECSPESGTVVNQIVDRITTFGGFSLLVDYGHDGSRNTHSFRAYKNHKQVDTLENPGLADLTADVDFGYLSTLVKDRVVIYGPNEQREFLAQLGIEHRLRRLLQVCKDRKQQEQLIESYNMLMGDMGLKFKAWALFPKTLEFILEQRGGPAGFSAKKKTTEN</sequence>
<dbReference type="EC" id="2.1.1.320" evidence="1"/>
<dbReference type="EMBL" id="Z47357">
    <property type="protein sequence ID" value="CAA87427.3"/>
    <property type="molecule type" value="Genomic_DNA"/>
</dbReference>
<dbReference type="RefSeq" id="NP_499246.2">
    <property type="nucleotide sequence ID" value="NM_066845.8"/>
</dbReference>
<dbReference type="SMR" id="Q09644"/>
<dbReference type="BioGRID" id="56689">
    <property type="interactions" value="1"/>
</dbReference>
<dbReference type="FunCoup" id="Q09644">
    <property type="interactions" value="2829"/>
</dbReference>
<dbReference type="STRING" id="6239.ZK1128.1.1"/>
<dbReference type="PaxDb" id="6239-ZK1128.1.1"/>
<dbReference type="PeptideAtlas" id="Q09644"/>
<dbReference type="EnsemblMetazoa" id="ZK1128.1.1">
    <property type="protein sequence ID" value="ZK1128.1.1"/>
    <property type="gene ID" value="WBGene00014227"/>
</dbReference>
<dbReference type="GeneID" id="259527"/>
<dbReference type="KEGG" id="cel:CELE_ZK1128.1"/>
<dbReference type="UCSC" id="ZK1128.1.1">
    <property type="organism name" value="c. elegans"/>
</dbReference>
<dbReference type="AGR" id="WB:WBGene00014227"/>
<dbReference type="CTD" id="259527"/>
<dbReference type="WormBase" id="ZK1128.1">
    <property type="protein sequence ID" value="CE41493"/>
    <property type="gene ID" value="WBGene00014227"/>
</dbReference>
<dbReference type="eggNOG" id="KOG2901">
    <property type="taxonomic scope" value="Eukaryota"/>
</dbReference>
<dbReference type="GeneTree" id="ENSGT00390000001588"/>
<dbReference type="HOGENOM" id="CLU_024840_3_1_1"/>
<dbReference type="InParanoid" id="Q09644"/>
<dbReference type="OMA" id="YYHPQRN"/>
<dbReference type="OrthoDB" id="438553at2759"/>
<dbReference type="PhylomeDB" id="Q09644"/>
<dbReference type="Reactome" id="R-CEL-6799198">
    <property type="pathway name" value="Complex I biogenesis"/>
</dbReference>
<dbReference type="PRO" id="PR:Q09644"/>
<dbReference type="Proteomes" id="UP000001940">
    <property type="component" value="Chromosome III"/>
</dbReference>
<dbReference type="Bgee" id="WBGene00014227">
    <property type="expression patterns" value="Expressed in germ line (C elegans) and 4 other cell types or tissues"/>
</dbReference>
<dbReference type="GO" id="GO:0005739">
    <property type="term" value="C:mitochondrion"/>
    <property type="evidence" value="ECO:0000250"/>
    <property type="project" value="UniProtKB"/>
</dbReference>
<dbReference type="GO" id="GO:0035243">
    <property type="term" value="F:protein-arginine omega-N symmetric methyltransferase activity"/>
    <property type="evidence" value="ECO:0000318"/>
    <property type="project" value="GO_Central"/>
</dbReference>
<dbReference type="GO" id="GO:0032259">
    <property type="term" value="P:methylation"/>
    <property type="evidence" value="ECO:0007669"/>
    <property type="project" value="UniProtKB-KW"/>
</dbReference>
<dbReference type="GO" id="GO:0032981">
    <property type="term" value="P:mitochondrial respiratory chain complex I assembly"/>
    <property type="evidence" value="ECO:0000250"/>
    <property type="project" value="UniProtKB"/>
</dbReference>
<dbReference type="FunFam" id="3.40.50.12710:FF:000017">
    <property type="entry name" value="Protein arginine methyltransferase NDUFAF7 homolog, mitochondrial"/>
    <property type="match status" value="1"/>
</dbReference>
<dbReference type="Gene3D" id="3.40.50.12710">
    <property type="match status" value="1"/>
</dbReference>
<dbReference type="InterPro" id="IPR003788">
    <property type="entry name" value="NDUFAF7"/>
</dbReference>
<dbReference type="InterPro" id="IPR038375">
    <property type="entry name" value="NDUFAF7_sf"/>
</dbReference>
<dbReference type="InterPro" id="IPR029063">
    <property type="entry name" value="SAM-dependent_MTases_sf"/>
</dbReference>
<dbReference type="PANTHER" id="PTHR12049">
    <property type="entry name" value="PROTEIN ARGININE METHYLTRANSFERASE NDUFAF7, MITOCHONDRIAL"/>
    <property type="match status" value="1"/>
</dbReference>
<dbReference type="PANTHER" id="PTHR12049:SF7">
    <property type="entry name" value="PROTEIN ARGININE METHYLTRANSFERASE NDUFAF7, MITOCHONDRIAL"/>
    <property type="match status" value="1"/>
</dbReference>
<dbReference type="Pfam" id="PF02636">
    <property type="entry name" value="Methyltransf_28"/>
    <property type="match status" value="1"/>
</dbReference>
<dbReference type="SUPFAM" id="SSF53335">
    <property type="entry name" value="S-adenosyl-L-methionine-dependent methyltransferases"/>
    <property type="match status" value="1"/>
</dbReference>
<keyword id="KW-0489">Methyltransferase</keyword>
<keyword id="KW-0496">Mitochondrion</keyword>
<keyword id="KW-1185">Reference proteome</keyword>
<keyword id="KW-0808">Transferase</keyword>
<accession>Q09644</accession>
<name>NDUF7_CAEEL</name>
<organism>
    <name type="scientific">Caenorhabditis elegans</name>
    <dbReference type="NCBI Taxonomy" id="6239"/>
    <lineage>
        <taxon>Eukaryota</taxon>
        <taxon>Metazoa</taxon>
        <taxon>Ecdysozoa</taxon>
        <taxon>Nematoda</taxon>
        <taxon>Chromadorea</taxon>
        <taxon>Rhabditida</taxon>
        <taxon>Rhabditina</taxon>
        <taxon>Rhabditomorpha</taxon>
        <taxon>Rhabditoidea</taxon>
        <taxon>Rhabditidae</taxon>
        <taxon>Peloderinae</taxon>
        <taxon>Caenorhabditis</taxon>
    </lineage>
</organism>
<evidence type="ECO:0000250" key="1">
    <source>
        <dbReference type="UniProtKB" id="Q7L592"/>
    </source>
</evidence>
<evidence type="ECO:0000305" key="2"/>
<gene>
    <name type="ORF">ZK1128.1</name>
</gene>
<comment type="function">
    <text evidence="1">Arginine methyltransferase involved in the assembly or stability of mitochondrial NADH:ubiquinone oxidoreductase complex (complex I).</text>
</comment>
<comment type="catalytic activity">
    <reaction evidence="1">
        <text>L-arginyl-[protein] + 2 S-adenosyl-L-methionine = N(omega),N(omega)'-dimethyl-L-arginyl-[protein] + 2 S-adenosyl-L-homocysteine + 2 H(+)</text>
        <dbReference type="Rhea" id="RHEA:48108"/>
        <dbReference type="Rhea" id="RHEA-COMP:10532"/>
        <dbReference type="Rhea" id="RHEA-COMP:11992"/>
        <dbReference type="ChEBI" id="CHEBI:15378"/>
        <dbReference type="ChEBI" id="CHEBI:29965"/>
        <dbReference type="ChEBI" id="CHEBI:57856"/>
        <dbReference type="ChEBI" id="CHEBI:59789"/>
        <dbReference type="ChEBI" id="CHEBI:88221"/>
        <dbReference type="EC" id="2.1.1.320"/>
    </reaction>
</comment>
<comment type="subcellular location">
    <subcellularLocation>
        <location evidence="1">Mitochondrion</location>
    </subcellularLocation>
</comment>
<comment type="similarity">
    <text evidence="2">Belongs to the NDUFAF7 family.</text>
</comment>
<feature type="chain" id="PRO_0000315678" description="Protein arginine methyltransferase NDUFAF7 homolog, mitochondrial">
    <location>
        <begin position="1"/>
        <end position="426"/>
    </location>
</feature>
<proteinExistence type="inferred from homology"/>